<gene>
    <name evidence="1" type="primary">rpsT</name>
    <name type="ordered locus">LA_3799</name>
</gene>
<protein>
    <recommendedName>
        <fullName evidence="1">Small ribosomal subunit protein bS20</fullName>
    </recommendedName>
    <alternativeName>
        <fullName evidence="3">30S ribosomal protein S20</fullName>
    </alternativeName>
</protein>
<organism>
    <name type="scientific">Leptospira interrogans serogroup Icterohaemorrhagiae serovar Lai (strain 56601)</name>
    <dbReference type="NCBI Taxonomy" id="189518"/>
    <lineage>
        <taxon>Bacteria</taxon>
        <taxon>Pseudomonadati</taxon>
        <taxon>Spirochaetota</taxon>
        <taxon>Spirochaetia</taxon>
        <taxon>Leptospirales</taxon>
        <taxon>Leptospiraceae</taxon>
        <taxon>Leptospira</taxon>
    </lineage>
</organism>
<sequence length="88" mass="10045">MANIKSSEKDIRRTKRRNAANSQNRSRLRTQAKKVLKAIKEKDQKAAMTLFIEYTSLLDKAAKTNLIHSKNADRKKSRMAKRLNSSAA</sequence>
<feature type="chain" id="PRO_0000167983" description="Small ribosomal subunit protein bS20">
    <location>
        <begin position="1"/>
        <end position="88"/>
    </location>
</feature>
<feature type="region of interest" description="Disordered" evidence="2">
    <location>
        <begin position="1"/>
        <end position="31"/>
    </location>
</feature>
<feature type="region of interest" description="Disordered" evidence="2">
    <location>
        <begin position="69"/>
        <end position="88"/>
    </location>
</feature>
<feature type="compositionally biased region" description="Basic and acidic residues" evidence="2">
    <location>
        <begin position="1"/>
        <end position="11"/>
    </location>
</feature>
<comment type="function">
    <text evidence="1">Binds directly to 16S ribosomal RNA.</text>
</comment>
<comment type="similarity">
    <text evidence="1">Belongs to the bacterial ribosomal protein bS20 family.</text>
</comment>
<evidence type="ECO:0000255" key="1">
    <source>
        <dbReference type="HAMAP-Rule" id="MF_00500"/>
    </source>
</evidence>
<evidence type="ECO:0000256" key="2">
    <source>
        <dbReference type="SAM" id="MobiDB-lite"/>
    </source>
</evidence>
<evidence type="ECO:0000305" key="3"/>
<proteinExistence type="inferred from homology"/>
<accession>Q8EZQ3</accession>
<name>RS20_LEPIN</name>
<keyword id="KW-1185">Reference proteome</keyword>
<keyword id="KW-0687">Ribonucleoprotein</keyword>
<keyword id="KW-0689">Ribosomal protein</keyword>
<keyword id="KW-0694">RNA-binding</keyword>
<keyword id="KW-0699">rRNA-binding</keyword>
<reference key="1">
    <citation type="journal article" date="2003" name="Nature">
        <title>Unique physiological and pathogenic features of Leptospira interrogans revealed by whole-genome sequencing.</title>
        <authorList>
            <person name="Ren S.-X."/>
            <person name="Fu G."/>
            <person name="Jiang X.-G."/>
            <person name="Zeng R."/>
            <person name="Miao Y.-G."/>
            <person name="Xu H."/>
            <person name="Zhang Y.-X."/>
            <person name="Xiong H."/>
            <person name="Lu G."/>
            <person name="Lu L.-F."/>
            <person name="Jiang H.-Q."/>
            <person name="Jia J."/>
            <person name="Tu Y.-F."/>
            <person name="Jiang J.-X."/>
            <person name="Gu W.-Y."/>
            <person name="Zhang Y.-Q."/>
            <person name="Cai Z."/>
            <person name="Sheng H.-H."/>
            <person name="Yin H.-F."/>
            <person name="Zhang Y."/>
            <person name="Zhu G.-F."/>
            <person name="Wan M."/>
            <person name="Huang H.-L."/>
            <person name="Qian Z."/>
            <person name="Wang S.-Y."/>
            <person name="Ma W."/>
            <person name="Yao Z.-J."/>
            <person name="Shen Y."/>
            <person name="Qiang B.-Q."/>
            <person name="Xia Q.-C."/>
            <person name="Guo X.-K."/>
            <person name="Danchin A."/>
            <person name="Saint Girons I."/>
            <person name="Somerville R.L."/>
            <person name="Wen Y.-M."/>
            <person name="Shi M.-H."/>
            <person name="Chen Z."/>
            <person name="Xu J.-G."/>
            <person name="Zhao G.-P."/>
        </authorList>
    </citation>
    <scope>NUCLEOTIDE SEQUENCE [LARGE SCALE GENOMIC DNA]</scope>
    <source>
        <strain>56601</strain>
    </source>
</reference>
<dbReference type="EMBL" id="AE010300">
    <property type="protein sequence ID" value="AAN50997.1"/>
    <property type="molecule type" value="Genomic_DNA"/>
</dbReference>
<dbReference type="RefSeq" id="NP_713979.1">
    <property type="nucleotide sequence ID" value="NC_004342.2"/>
</dbReference>
<dbReference type="RefSeq" id="WP_001274025.1">
    <property type="nucleotide sequence ID" value="NC_004342.2"/>
</dbReference>
<dbReference type="SMR" id="Q8EZQ3"/>
<dbReference type="FunCoup" id="Q8EZQ3">
    <property type="interactions" value="450"/>
</dbReference>
<dbReference type="STRING" id="189518.LA_3799"/>
<dbReference type="PaxDb" id="189518-LA_3799"/>
<dbReference type="EnsemblBacteria" id="AAN50997">
    <property type="protein sequence ID" value="AAN50997"/>
    <property type="gene ID" value="LA_3799"/>
</dbReference>
<dbReference type="GeneID" id="61143800"/>
<dbReference type="KEGG" id="lil:LA_3799"/>
<dbReference type="PATRIC" id="fig|189518.3.peg.3768"/>
<dbReference type="HOGENOM" id="CLU_160655_3_1_12"/>
<dbReference type="InParanoid" id="Q8EZQ3"/>
<dbReference type="OrthoDB" id="9808392at2"/>
<dbReference type="PRO" id="PR:Q8EZQ3"/>
<dbReference type="Proteomes" id="UP000001408">
    <property type="component" value="Chromosome I"/>
</dbReference>
<dbReference type="GO" id="GO:0005829">
    <property type="term" value="C:cytosol"/>
    <property type="evidence" value="ECO:0000318"/>
    <property type="project" value="GO_Central"/>
</dbReference>
<dbReference type="GO" id="GO:0015935">
    <property type="term" value="C:small ribosomal subunit"/>
    <property type="evidence" value="ECO:0000318"/>
    <property type="project" value="GO_Central"/>
</dbReference>
<dbReference type="GO" id="GO:0070181">
    <property type="term" value="F:small ribosomal subunit rRNA binding"/>
    <property type="evidence" value="ECO:0000318"/>
    <property type="project" value="GO_Central"/>
</dbReference>
<dbReference type="GO" id="GO:0003735">
    <property type="term" value="F:structural constituent of ribosome"/>
    <property type="evidence" value="ECO:0007669"/>
    <property type="project" value="InterPro"/>
</dbReference>
<dbReference type="GO" id="GO:0006412">
    <property type="term" value="P:translation"/>
    <property type="evidence" value="ECO:0007669"/>
    <property type="project" value="UniProtKB-UniRule"/>
</dbReference>
<dbReference type="FunFam" id="1.20.58.110:FF:000004">
    <property type="entry name" value="30S ribosomal protein S20"/>
    <property type="match status" value="1"/>
</dbReference>
<dbReference type="Gene3D" id="1.20.58.110">
    <property type="entry name" value="Ribosomal protein S20"/>
    <property type="match status" value="1"/>
</dbReference>
<dbReference type="HAMAP" id="MF_00500">
    <property type="entry name" value="Ribosomal_bS20"/>
    <property type="match status" value="1"/>
</dbReference>
<dbReference type="InterPro" id="IPR002583">
    <property type="entry name" value="Ribosomal_bS20"/>
</dbReference>
<dbReference type="InterPro" id="IPR036510">
    <property type="entry name" value="Ribosomal_bS20_sf"/>
</dbReference>
<dbReference type="NCBIfam" id="TIGR00029">
    <property type="entry name" value="S20"/>
    <property type="match status" value="1"/>
</dbReference>
<dbReference type="PANTHER" id="PTHR33398">
    <property type="entry name" value="30S RIBOSOMAL PROTEIN S20"/>
    <property type="match status" value="1"/>
</dbReference>
<dbReference type="PANTHER" id="PTHR33398:SF1">
    <property type="entry name" value="SMALL RIBOSOMAL SUBUNIT PROTEIN BS20C"/>
    <property type="match status" value="1"/>
</dbReference>
<dbReference type="Pfam" id="PF01649">
    <property type="entry name" value="Ribosomal_S20p"/>
    <property type="match status" value="1"/>
</dbReference>
<dbReference type="SUPFAM" id="SSF46992">
    <property type="entry name" value="Ribosomal protein S20"/>
    <property type="match status" value="1"/>
</dbReference>